<accession>B1IPI6</accession>
<name>ASTE_ECOLC</name>
<dbReference type="EC" id="3.5.1.96" evidence="1"/>
<dbReference type="EMBL" id="CP000946">
    <property type="protein sequence ID" value="ACA77536.1"/>
    <property type="molecule type" value="Genomic_DNA"/>
</dbReference>
<dbReference type="RefSeq" id="WP_000368508.1">
    <property type="nucleotide sequence ID" value="NZ_MTFT01000006.1"/>
</dbReference>
<dbReference type="SMR" id="B1IPI6"/>
<dbReference type="KEGG" id="ecl:EcolC_1888"/>
<dbReference type="HOGENOM" id="CLU_071608_0_0_6"/>
<dbReference type="UniPathway" id="UPA00185">
    <property type="reaction ID" value="UER00283"/>
</dbReference>
<dbReference type="GO" id="GO:0016788">
    <property type="term" value="F:hydrolase activity, acting on ester bonds"/>
    <property type="evidence" value="ECO:0007669"/>
    <property type="project" value="UniProtKB-UniRule"/>
</dbReference>
<dbReference type="GO" id="GO:0009017">
    <property type="term" value="F:succinylglutamate desuccinylase activity"/>
    <property type="evidence" value="ECO:0007669"/>
    <property type="project" value="UniProtKB-EC"/>
</dbReference>
<dbReference type="GO" id="GO:0008270">
    <property type="term" value="F:zinc ion binding"/>
    <property type="evidence" value="ECO:0007669"/>
    <property type="project" value="UniProtKB-UniRule"/>
</dbReference>
<dbReference type="GO" id="GO:0019544">
    <property type="term" value="P:arginine catabolic process to glutamate"/>
    <property type="evidence" value="ECO:0007669"/>
    <property type="project" value="UniProtKB-UniRule"/>
</dbReference>
<dbReference type="GO" id="GO:0019545">
    <property type="term" value="P:arginine catabolic process to succinate"/>
    <property type="evidence" value="ECO:0007669"/>
    <property type="project" value="UniProtKB-UniRule"/>
</dbReference>
<dbReference type="CDD" id="cd03855">
    <property type="entry name" value="M14_ASTE"/>
    <property type="match status" value="1"/>
</dbReference>
<dbReference type="FunFam" id="3.40.630.10:FF:000017">
    <property type="entry name" value="Succinylglutamate desuccinylase"/>
    <property type="match status" value="1"/>
</dbReference>
<dbReference type="Gene3D" id="3.40.630.10">
    <property type="entry name" value="Zn peptidases"/>
    <property type="match status" value="1"/>
</dbReference>
<dbReference type="HAMAP" id="MF_00767">
    <property type="entry name" value="Arg_catab_AstE"/>
    <property type="match status" value="1"/>
</dbReference>
<dbReference type="InterPro" id="IPR050178">
    <property type="entry name" value="AspA/AstE_fam"/>
</dbReference>
<dbReference type="InterPro" id="IPR055438">
    <property type="entry name" value="AstE_AspA_cat"/>
</dbReference>
<dbReference type="InterPro" id="IPR007036">
    <property type="entry name" value="Aste_AspA_hybrid_dom"/>
</dbReference>
<dbReference type="InterPro" id="IPR016681">
    <property type="entry name" value="SuccinylGlu_desuccinylase"/>
</dbReference>
<dbReference type="NCBIfam" id="TIGR03242">
    <property type="entry name" value="arg_catab_astE"/>
    <property type="match status" value="1"/>
</dbReference>
<dbReference type="NCBIfam" id="NF003706">
    <property type="entry name" value="PRK05324.1"/>
    <property type="match status" value="1"/>
</dbReference>
<dbReference type="PANTHER" id="PTHR15162">
    <property type="entry name" value="ASPARTOACYLASE"/>
    <property type="match status" value="1"/>
</dbReference>
<dbReference type="PANTHER" id="PTHR15162:SF7">
    <property type="entry name" value="SUCCINYLGLUTAMATE DESUCCINYLASE"/>
    <property type="match status" value="1"/>
</dbReference>
<dbReference type="Pfam" id="PF24827">
    <property type="entry name" value="AstE_AspA_cat"/>
    <property type="match status" value="1"/>
</dbReference>
<dbReference type="Pfam" id="PF04952">
    <property type="entry name" value="AstE_AspA_hybrid"/>
    <property type="match status" value="1"/>
</dbReference>
<dbReference type="PIRSF" id="PIRSF017020">
    <property type="entry name" value="AstE"/>
    <property type="match status" value="1"/>
</dbReference>
<dbReference type="SUPFAM" id="SSF53187">
    <property type="entry name" value="Zn-dependent exopeptidases"/>
    <property type="match status" value="1"/>
</dbReference>
<evidence type="ECO:0000255" key="1">
    <source>
        <dbReference type="HAMAP-Rule" id="MF_00767"/>
    </source>
</evidence>
<feature type="chain" id="PRO_1000083544" description="Succinylglutamate desuccinylase">
    <location>
        <begin position="1"/>
        <end position="322"/>
    </location>
</feature>
<feature type="active site" evidence="1">
    <location>
        <position position="210"/>
    </location>
</feature>
<feature type="binding site" evidence="1">
    <location>
        <position position="53"/>
    </location>
    <ligand>
        <name>Zn(2+)</name>
        <dbReference type="ChEBI" id="CHEBI:29105"/>
    </ligand>
</feature>
<feature type="binding site" evidence="1">
    <location>
        <position position="56"/>
    </location>
    <ligand>
        <name>Zn(2+)</name>
        <dbReference type="ChEBI" id="CHEBI:29105"/>
    </ligand>
</feature>
<feature type="binding site" evidence="1">
    <location>
        <position position="147"/>
    </location>
    <ligand>
        <name>Zn(2+)</name>
        <dbReference type="ChEBI" id="CHEBI:29105"/>
    </ligand>
</feature>
<gene>
    <name evidence="1" type="primary">astE</name>
    <name type="ordered locus">EcolC_1888</name>
</gene>
<proteinExistence type="inferred from homology"/>
<comment type="function">
    <text evidence="1">Transforms N(2)-succinylglutamate into succinate and glutamate.</text>
</comment>
<comment type="catalytic activity">
    <reaction evidence="1">
        <text>N-succinyl-L-glutamate + H2O = L-glutamate + succinate</text>
        <dbReference type="Rhea" id="RHEA:15169"/>
        <dbReference type="ChEBI" id="CHEBI:15377"/>
        <dbReference type="ChEBI" id="CHEBI:29985"/>
        <dbReference type="ChEBI" id="CHEBI:30031"/>
        <dbReference type="ChEBI" id="CHEBI:58763"/>
        <dbReference type="EC" id="3.5.1.96"/>
    </reaction>
</comment>
<comment type="cofactor">
    <cofactor evidence="1">
        <name>Zn(2+)</name>
        <dbReference type="ChEBI" id="CHEBI:29105"/>
    </cofactor>
    <text evidence="1">Binds 1 zinc ion per subunit.</text>
</comment>
<comment type="pathway">
    <text evidence="1">Amino-acid degradation; L-arginine degradation via AST pathway; L-glutamate and succinate from L-arginine: step 5/5.</text>
</comment>
<comment type="similarity">
    <text evidence="1">Belongs to the AspA/AstE family. Succinylglutamate desuccinylase subfamily.</text>
</comment>
<sequence length="322" mass="35799">MDNFLALTLTGKKPVITEREINGVRWRWLGDGVLELTPLTPPQGALVISAGIHGNETAPVEMLDALLGAISHGEIPLRWRLLVILGNPPALKQGKRYCHSDMNRMFGGRWQLFAESGETCRARELEQCLEDFYDQGKESVRWHLDLHTAIRGSLHPQFGVLPQRDIPWDEKFLTWLGAAGLEALVFHQEPGGTFTHFSARHFGALACTLELGKALPFGQNDLRQFAVTASAIAALLSGESVGIVRTPPLRYRVVSQITRHSPSFEMHMASDTLNFMPFKKGTLLAQDGEERFTVTHDVEYVLFPNPLVALGLRAGLMLEKIS</sequence>
<organism>
    <name type="scientific">Escherichia coli (strain ATCC 8739 / DSM 1576 / NBRC 3972 / NCIMB 8545 / WDCM 00012 / Crooks)</name>
    <dbReference type="NCBI Taxonomy" id="481805"/>
    <lineage>
        <taxon>Bacteria</taxon>
        <taxon>Pseudomonadati</taxon>
        <taxon>Pseudomonadota</taxon>
        <taxon>Gammaproteobacteria</taxon>
        <taxon>Enterobacterales</taxon>
        <taxon>Enterobacteriaceae</taxon>
        <taxon>Escherichia</taxon>
    </lineage>
</organism>
<keyword id="KW-0056">Arginine metabolism</keyword>
<keyword id="KW-0378">Hydrolase</keyword>
<keyword id="KW-0479">Metal-binding</keyword>
<keyword id="KW-0862">Zinc</keyword>
<reference key="1">
    <citation type="submission" date="2008-02" db="EMBL/GenBank/DDBJ databases">
        <title>Complete sequence of Escherichia coli C str. ATCC 8739.</title>
        <authorList>
            <person name="Copeland A."/>
            <person name="Lucas S."/>
            <person name="Lapidus A."/>
            <person name="Glavina del Rio T."/>
            <person name="Dalin E."/>
            <person name="Tice H."/>
            <person name="Bruce D."/>
            <person name="Goodwin L."/>
            <person name="Pitluck S."/>
            <person name="Kiss H."/>
            <person name="Brettin T."/>
            <person name="Detter J.C."/>
            <person name="Han C."/>
            <person name="Kuske C.R."/>
            <person name="Schmutz J."/>
            <person name="Larimer F."/>
            <person name="Land M."/>
            <person name="Hauser L."/>
            <person name="Kyrpides N."/>
            <person name="Mikhailova N."/>
            <person name="Ingram L."/>
            <person name="Richardson P."/>
        </authorList>
    </citation>
    <scope>NUCLEOTIDE SEQUENCE [LARGE SCALE GENOMIC DNA]</scope>
    <source>
        <strain>ATCC 8739 / DSM 1576 / NBRC 3972 / NCIMB 8545 / WDCM 00012 / Crooks</strain>
    </source>
</reference>
<protein>
    <recommendedName>
        <fullName evidence="1">Succinylglutamate desuccinylase</fullName>
        <ecNumber evidence="1">3.5.1.96</ecNumber>
    </recommendedName>
</protein>